<gene>
    <name evidence="3" type="primary">pigB</name>
</gene>
<evidence type="ECO:0000255" key="1"/>
<evidence type="ECO:0000269" key="2">
    <source>
    </source>
</evidence>
<evidence type="ECO:0000303" key="3">
    <source>
    </source>
</evidence>
<evidence type="ECO:0000305" key="4"/>
<evidence type="ECO:0000305" key="5">
    <source>
    </source>
</evidence>
<comment type="function">
    <text evidence="2">Involved in the biosynthesis of 2-methyl-3-n-amyl-pyrrole (MAP), one of the terminal products involved in the biosynthesis of the red antibiotic prodigiosin (Pig). Catalyzes the oxidation of dihydro form of MAP (H2MAP) to yield MAP.</text>
</comment>
<comment type="cofactor">
    <cofactor evidence="5">
        <name>FAD</name>
        <dbReference type="ChEBI" id="CHEBI:57692"/>
    </cofactor>
</comment>
<comment type="pathway">
    <text evidence="5">Antibiotic biosynthesis; prodigiosin biosynthesis.</text>
</comment>
<comment type="subcellular location">
    <subcellularLocation>
        <location evidence="1">Membrane</location>
        <topology evidence="1">Multi-pass membrane protein</topology>
    </subcellularLocation>
</comment>
<comment type="disruption phenotype">
    <text evidence="2">Cells lacking this gene show a white phenotype and produce 4-hydroxy-2,2'-bipyrrole-5-carbaldehyde (HBC), 4- methoxy-2,2'-bipyrrole-5-carbaldehyde (MBC) and a dihydro form of MAP (H2MAP).</text>
</comment>
<comment type="similarity">
    <text evidence="4">Belongs to the flavin monoamine oxidase family.</text>
</comment>
<proteinExistence type="inferred from homology"/>
<keyword id="KW-0045">Antibiotic biosynthesis</keyword>
<keyword id="KW-0274">FAD</keyword>
<keyword id="KW-0285">Flavoprotein</keyword>
<keyword id="KW-0472">Membrane</keyword>
<keyword id="KW-0560">Oxidoreductase</keyword>
<keyword id="KW-0732">Signal</keyword>
<keyword id="KW-0812">Transmembrane</keyword>
<keyword id="KW-1133">Transmembrane helix</keyword>
<dbReference type="EC" id="1.-.-.-"/>
<dbReference type="EMBL" id="AJ833001">
    <property type="protein sequence ID" value="CAH55630.1"/>
    <property type="molecule type" value="Genomic_DNA"/>
</dbReference>
<dbReference type="RefSeq" id="WP_021014640.1">
    <property type="nucleotide sequence ID" value="NZ_CP025084.1"/>
</dbReference>
<dbReference type="SMR" id="Q5W270"/>
<dbReference type="STRING" id="104623.Ser39006_01370"/>
<dbReference type="KEGG" id="ag:CAH55630"/>
<dbReference type="eggNOG" id="COG1232">
    <property type="taxonomic scope" value="Bacteria"/>
</dbReference>
<dbReference type="OrthoDB" id="9774675at2"/>
<dbReference type="UniPathway" id="UPA01072"/>
<dbReference type="GO" id="GO:0016020">
    <property type="term" value="C:membrane"/>
    <property type="evidence" value="ECO:0007669"/>
    <property type="project" value="UniProtKB-SubCell"/>
</dbReference>
<dbReference type="GO" id="GO:0016491">
    <property type="term" value="F:oxidoreductase activity"/>
    <property type="evidence" value="ECO:0000315"/>
    <property type="project" value="UniProtKB"/>
</dbReference>
<dbReference type="GO" id="GO:0017000">
    <property type="term" value="P:antibiotic biosynthetic process"/>
    <property type="evidence" value="ECO:0000315"/>
    <property type="project" value="UniProtKB"/>
</dbReference>
<dbReference type="Gene3D" id="3.90.660.10">
    <property type="match status" value="1"/>
</dbReference>
<dbReference type="Gene3D" id="3.50.50.60">
    <property type="entry name" value="FAD/NAD(P)-binding domain"/>
    <property type="match status" value="2"/>
</dbReference>
<dbReference type="Gene3D" id="1.10.405.10">
    <property type="entry name" value="Guanine Nucleotide Dissociation Inhibitor, domain 1"/>
    <property type="match status" value="1"/>
</dbReference>
<dbReference type="InterPro" id="IPR002937">
    <property type="entry name" value="Amino_oxidase"/>
</dbReference>
<dbReference type="InterPro" id="IPR046104">
    <property type="entry name" value="DUF6041"/>
</dbReference>
<dbReference type="InterPro" id="IPR036188">
    <property type="entry name" value="FAD/NAD-bd_sf"/>
</dbReference>
<dbReference type="InterPro" id="IPR050703">
    <property type="entry name" value="Flavin_MAO"/>
</dbReference>
<dbReference type="PANTHER" id="PTHR43563">
    <property type="entry name" value="AMINE OXIDASE"/>
    <property type="match status" value="1"/>
</dbReference>
<dbReference type="PANTHER" id="PTHR43563:SF1">
    <property type="entry name" value="AMINE OXIDASE [FLAVIN-CONTAINING] B"/>
    <property type="match status" value="1"/>
</dbReference>
<dbReference type="Pfam" id="PF01593">
    <property type="entry name" value="Amino_oxidase"/>
    <property type="match status" value="1"/>
</dbReference>
<dbReference type="Pfam" id="PF19507">
    <property type="entry name" value="DUF6041"/>
    <property type="match status" value="1"/>
</dbReference>
<dbReference type="SUPFAM" id="SSF51905">
    <property type="entry name" value="FAD/NAD(P)-binding domain"/>
    <property type="match status" value="1"/>
</dbReference>
<name>PIGB_SERS3</name>
<accession>Q5W270</accession>
<organism>
    <name type="scientific">Serratia sp. (strain ATCC 39006)</name>
    <name type="common">Prodigiosinella confusarubida</name>
    <dbReference type="NCBI Taxonomy" id="104623"/>
    <lineage>
        <taxon>Bacteria</taxon>
        <taxon>Pseudomonadati</taxon>
        <taxon>Pseudomonadota</taxon>
        <taxon>Gammaproteobacteria</taxon>
        <taxon>Enterobacterales</taxon>
        <taxon>Pectobacteriaceae</taxon>
        <taxon>Prodigiosinella</taxon>
    </lineage>
</organism>
<sequence length="670" mass="73860">MIIQRLFGILYMLAGLAKAFPQFENVPAVLRQAAIANQGTWYAAASIWLGAHGDVINILVGVVLFGSGVILMLNPLWTTLVIYAQLLMMAVFVVILHQSQPQVMLLDGVFALAALYMLRGQYHRKPKPRTFPTTSFSLPTPSSESSFSAPLGDEYDVVIIGGGASGLTAASEFTHERVLVLEKSSTFGGNARYHTFNRLKHPTAGVCFQEPFPGSNMLRLLKKIGLEGKYKSNEKDTLVFFDTFLLLKCLGEIVVGFIKQPRYLLKLSVWGLTSQLFLHAIIGKPYVVAAKQLGDPIFADLYTFLDKFSPRGDFYPRLPWTPNGSWSKAHMELLDNISLYTYLFEPDKLGRLPEQLRPPARLGKLVENAVSTTLRVECLDIHDVSAYVGLHFLVGYLRGNLVTLPGGNGSISAGLCKYLSHQRNVTLQNHVQLTAVEPQHNGTCIQFTINGQPRQVQAQQIIWAAPKTQLATWLPGLPAKQLAAIKNIRHEDYYLANVFLSKPVLGHSFGGYMIEPDSNKDPFSWCKAGTCLVANWMDDHADVDVGVLTLLKPTTRSERQDRTAQNAFLALQQQTYAEIAKVLRNIGIGAEVIEDIQIWYWPAGLVTSVVGQQAEGVFETARQSFENIHFANQDSVGVGNIESAILSGIDAANAVKAQLMDTENVVEVAG</sequence>
<protein>
    <recommendedName>
        <fullName evidence="5">Oxidoreductase PigB</fullName>
        <ecNumber>1.-.-.-</ecNumber>
    </recommendedName>
</protein>
<feature type="signal peptide" evidence="1">
    <location>
        <begin position="1"/>
        <end position="19"/>
    </location>
</feature>
<feature type="chain" id="PRO_0000436236" description="Oxidoreductase PigB">
    <location>
        <begin position="20"/>
        <end position="670"/>
    </location>
</feature>
<feature type="transmembrane region" description="Helical" evidence="1">
    <location>
        <begin position="53"/>
        <end position="73"/>
    </location>
</feature>
<feature type="transmembrane region" description="Helical" evidence="1">
    <location>
        <begin position="76"/>
        <end position="96"/>
    </location>
</feature>
<feature type="transmembrane region" description="Helical" evidence="1">
    <location>
        <begin position="98"/>
        <end position="118"/>
    </location>
</feature>
<feature type="transmembrane region" description="Helical" evidence="1">
    <location>
        <begin position="238"/>
        <end position="258"/>
    </location>
</feature>
<reference key="1">
    <citation type="journal article" date="2004" name="Microbiology">
        <title>The Serratia gene cluster encoding biosynthesis of the red antibiotic, prodigiosin, shows species- and strain-dependent genome context variation.</title>
        <authorList>
            <person name="Harris A.K."/>
            <person name="Williamson N.R."/>
            <person name="Slater H."/>
            <person name="Cox A."/>
            <person name="Abbasi S."/>
            <person name="Foulds I."/>
            <person name="Simonsen H.T."/>
            <person name="Leeper F.J."/>
            <person name="Salmond G.P."/>
        </authorList>
    </citation>
    <scope>NUCLEOTIDE SEQUENCE [GENOMIC DNA]</scope>
    <source>
        <strain>ATCC 39006 / SC 11482</strain>
    </source>
</reference>
<reference key="2">
    <citation type="journal article" date="2005" name="Mol. Microbiol.">
        <title>Biosynthesis of the red antibiotic, prodigiosin, in Serratia: identification of a novel 2-methyl-3-n-amyl-pyrrole (MAP) assembly pathway, definition of the terminal condensing enzyme, and implications for undecylprodigiosin biosynthesis in Streptomyces.</title>
        <authorList>
            <person name="Williamson N.R."/>
            <person name="Simonsen H.T."/>
            <person name="Ahmed R.A."/>
            <person name="Goldet G."/>
            <person name="Slater H."/>
            <person name="Woodley L."/>
            <person name="Leeper F.J."/>
            <person name="Salmond G.P."/>
        </authorList>
    </citation>
    <scope>FUNCTION</scope>
    <scope>DISRUPTION PHENOTYPE</scope>
    <scope>COFACTOR</scope>
    <scope>PATHWAY</scope>
    <source>
        <strain>ATCC 39006 / SC 11482</strain>
    </source>
</reference>